<keyword id="KW-0051">Antiviral defense</keyword>
<keyword id="KW-0113">Calvin cycle</keyword>
<keyword id="KW-0120">Carbon dioxide fixation</keyword>
<keyword id="KW-0965">Cell junction</keyword>
<keyword id="KW-0150">Chloroplast</keyword>
<keyword id="KW-0601">Photorespiration</keyword>
<keyword id="KW-0602">Photosynthesis</keyword>
<keyword id="KW-0934">Plastid</keyword>
<keyword id="KW-0809">Transit peptide</keyword>
<sequence>MASSVLSSAAVATRSNVAQANMVAPFTGLKSAASFPVSRKQNLDITSIASNGGRVQCMQVWPPINKKKYETLSYLPDLSVEQLLSEIEYLLKNGWVPCLEFETEHGFVYREHHKSPGYYDGRYWTMWKLPMFGCTDATQVLAEVEEAKKAYPQAWIRIIGFDNVRQVQCISFIAYKPEGY</sequence>
<dbReference type="EMBL" id="LN877373">
    <property type="protein sequence ID" value="CUA55116.1"/>
    <property type="molecule type" value="mRNA"/>
</dbReference>
<dbReference type="EMBL" id="MK070896">
    <property type="protein sequence ID" value="QCS40508.1"/>
    <property type="molecule type" value="mRNA"/>
</dbReference>
<dbReference type="SMR" id="A0A0S4IJL0"/>
<dbReference type="GO" id="GO:0009507">
    <property type="term" value="C:chloroplast"/>
    <property type="evidence" value="ECO:0007669"/>
    <property type="project" value="UniProtKB-SubCell"/>
</dbReference>
<dbReference type="GO" id="GO:0009506">
    <property type="term" value="C:plasmodesma"/>
    <property type="evidence" value="ECO:0000314"/>
    <property type="project" value="UniProtKB"/>
</dbReference>
<dbReference type="GO" id="GO:0019034">
    <property type="term" value="C:viral replication complex"/>
    <property type="evidence" value="ECO:0000314"/>
    <property type="project" value="UniProtKB"/>
</dbReference>
<dbReference type="GO" id="GO:0016984">
    <property type="term" value="F:ribulose-bisphosphate carboxylase activity"/>
    <property type="evidence" value="ECO:0007669"/>
    <property type="project" value="UniProtKB-UniRule"/>
</dbReference>
<dbReference type="GO" id="GO:0051607">
    <property type="term" value="P:defense response to virus"/>
    <property type="evidence" value="ECO:0007669"/>
    <property type="project" value="UniProtKB-KW"/>
</dbReference>
<dbReference type="GO" id="GO:0009853">
    <property type="term" value="P:photorespiration"/>
    <property type="evidence" value="ECO:0007669"/>
    <property type="project" value="UniProtKB-KW"/>
</dbReference>
<dbReference type="GO" id="GO:0019253">
    <property type="term" value="P:reductive pentose-phosphate cycle"/>
    <property type="evidence" value="ECO:0007669"/>
    <property type="project" value="UniProtKB-UniRule"/>
</dbReference>
<dbReference type="CDD" id="cd03527">
    <property type="entry name" value="RuBisCO_small"/>
    <property type="match status" value="1"/>
</dbReference>
<dbReference type="FunFam" id="3.30.190.10:FF:000001">
    <property type="entry name" value="Ribulose bisphosphate carboxylase small chain, chloroplastic"/>
    <property type="match status" value="1"/>
</dbReference>
<dbReference type="Gene3D" id="3.30.190.10">
    <property type="entry name" value="Ribulose bisphosphate carboxylase, small subunit"/>
    <property type="match status" value="1"/>
</dbReference>
<dbReference type="HAMAP" id="MF_00859">
    <property type="entry name" value="RuBisCO_S_bact"/>
    <property type="match status" value="1"/>
</dbReference>
<dbReference type="InterPro" id="IPR024681">
    <property type="entry name" value="RuBisCO_ssu"/>
</dbReference>
<dbReference type="InterPro" id="IPR000894">
    <property type="entry name" value="RuBisCO_ssu_dom"/>
</dbReference>
<dbReference type="InterPro" id="IPR024680">
    <property type="entry name" value="RuBisCO_ssu_N"/>
</dbReference>
<dbReference type="InterPro" id="IPR036385">
    <property type="entry name" value="RuBisCO_ssu_sf"/>
</dbReference>
<dbReference type="PANTHER" id="PTHR31262">
    <property type="entry name" value="RIBULOSE BISPHOSPHATE CARBOXYLASE SMALL CHAIN 1, CHLOROPLASTIC"/>
    <property type="match status" value="1"/>
</dbReference>
<dbReference type="PANTHER" id="PTHR31262:SF10">
    <property type="entry name" value="RIBULOSE BISPHOSPHATE CARBOXYLASE SMALL SUBUNIT 1A, CHLOROPLASTIC-RELATED"/>
    <property type="match status" value="1"/>
</dbReference>
<dbReference type="Pfam" id="PF12338">
    <property type="entry name" value="RbcS"/>
    <property type="match status" value="1"/>
</dbReference>
<dbReference type="Pfam" id="PF00101">
    <property type="entry name" value="RuBisCO_small"/>
    <property type="match status" value="1"/>
</dbReference>
<dbReference type="PRINTS" id="PR00152">
    <property type="entry name" value="RUBISCOSMALL"/>
</dbReference>
<dbReference type="SMART" id="SM00961">
    <property type="entry name" value="RuBisCO_small"/>
    <property type="match status" value="1"/>
</dbReference>
<dbReference type="SUPFAM" id="SSF55239">
    <property type="entry name" value="RuBisCO, small subunit"/>
    <property type="match status" value="1"/>
</dbReference>
<feature type="transit peptide" description="Chloroplast" evidence="2">
    <location>
        <begin position="1"/>
        <end position="56"/>
    </location>
</feature>
<feature type="chain" id="PRO_0000448714" description="Ribulose bisphosphate carboxylase small subunit, chloroplastic" evidence="2">
    <location>
        <begin position="57"/>
        <end position="180"/>
    </location>
</feature>
<feature type="sequence conflict" description="In Ref. 2; QCS40508." evidence="7" ref="2">
    <original>H</original>
    <variation>R</variation>
    <location>
        <position position="105"/>
    </location>
</feature>
<gene>
    <name evidence="5 6" type="primary">rbcS</name>
</gene>
<comment type="function">
    <text evidence="2 3">RuBisCO catalyzes two reactions: the carboxylation of D-ribulose 1,5-bisphosphate, the primary event in carbon dioxide fixation, as well as the oxidative fragmentation of the pentose substrate. Both reactions occur simultaneously and in competition at the same active site. Although the small subunit is not catalytic it is essential for maximal activity (By similarity). Involved in antiviral defenses (PubMed:23148080).</text>
</comment>
<comment type="function">
    <text evidence="3">(Microbial infection) Required for tobamovirus movement (e.g. tobacco mosaic virus (TMV)).</text>
</comment>
<comment type="subunit">
    <text evidence="2">Heterohexadecamer of 8 large and 8 small subunits.</text>
</comment>
<comment type="subunit">
    <text evidence="3">(Microbial infection) Binds to tobamovirus movement protein at the plasmodesmata (e.g. tomato mosaic virus MP AC P69513); this interaction seems required for viral systemic movement.</text>
</comment>
<comment type="subcellular location">
    <subcellularLocation>
        <location evidence="1 2">Plastid</location>
        <location evidence="1 2">Chloroplast</location>
    </subcellularLocation>
</comment>
<comment type="subcellular location">
    <subcellularLocation>
        <location evidence="3">Cell junction</location>
        <location evidence="3">Plasmodesma</location>
    </subcellularLocation>
    <text evidence="3">(Microbial infection) May be present in virus replication complexes (VRCs) of tobamovirus infected cells.</text>
</comment>
<comment type="disruption phenotype">
    <text evidence="3">In susceptible plants, increased tomato mosaic tobamovirus (ToMV) induced necrosis in inoculated leaves but delayed development of systemic viral symptoms (PubMed:23148080). ToMV is able to establish efficient local infection but not to move systemically (PubMed:23148080). Compromised Tm-2(2)-dependent resistance (PubMed:23148080).</text>
</comment>
<comment type="miscellaneous">
    <text evidence="2">The basic functional RuBisCO is composed of a large chain homodimer in a 'head-to-tail' conformation. In form I RuBisCO this homodimer is arranged in a barrel-like tetramer with the small subunits forming a tetrameric 'cap' on each end of the 'barrel'.</text>
</comment>
<comment type="similarity">
    <text evidence="2">Belongs to the RuBisCO small chain family.</text>
</comment>
<accession>A0A0S4IJL0</accession>
<accession>A0A4P8WEX4</accession>
<organism>
    <name type="scientific">Nicotiana benthamiana</name>
    <dbReference type="NCBI Taxonomy" id="4100"/>
    <lineage>
        <taxon>Eukaryota</taxon>
        <taxon>Viridiplantae</taxon>
        <taxon>Streptophyta</taxon>
        <taxon>Embryophyta</taxon>
        <taxon>Tracheophyta</taxon>
        <taxon>Spermatophyta</taxon>
        <taxon>Magnoliopsida</taxon>
        <taxon>eudicotyledons</taxon>
        <taxon>Gunneridae</taxon>
        <taxon>Pentapetalae</taxon>
        <taxon>asterids</taxon>
        <taxon>lamiids</taxon>
        <taxon>Solanales</taxon>
        <taxon>Solanaceae</taxon>
        <taxon>Nicotianoideae</taxon>
        <taxon>Nicotianeae</taxon>
        <taxon>Nicotiana</taxon>
    </lineage>
</organism>
<name>RBS_NICBE</name>
<reference key="1">
    <citation type="submission" date="2015-07" db="EMBL/GenBank/DDBJ databases">
        <title>Characterization of Rubisco small chain from Nicotiana benthamiana.</title>
        <authorList>
            <person name="Kumari R."/>
            <person name="Hallan V."/>
        </authorList>
    </citation>
    <scope>NUCLEOTIDE SEQUENCE [MRNA]</scope>
    <source>
        <tissue>Leaf</tissue>
    </source>
</reference>
<reference key="2">
    <citation type="submission" date="2018-10" db="EMBL/GenBank/DDBJ databases">
        <authorList>
            <person name="Liu X."/>
        </authorList>
    </citation>
    <scope>NUCLEOTIDE SEQUENCE [MRNA]</scope>
</reference>
<reference key="3">
    <citation type="journal article" date="2013" name="Plant Physiol.">
        <title>The rubisco small subunit is involved in tobamovirus movement and Tm-2(2)-mediated extreme resistance.</title>
        <authorList>
            <person name="Zhao J."/>
            <person name="Liu Q."/>
            <person name="Zhang H."/>
            <person name="Jia Q."/>
            <person name="Hong Y."/>
            <person name="Liu Y."/>
        </authorList>
    </citation>
    <scope>FUNCTION</scope>
    <scope>FUNCTION (MICROBIAL INFECTION)</scope>
    <scope>DISRUPTION PHENOTYPE</scope>
    <scope>INTERACTION WITH TOBACCO MOSAIC VIRUS MOVEMENT PROTEIN (MICROBIAL INFECTION)</scope>
    <scope>SUBCELLULAR LOCATION</scope>
</reference>
<evidence type="ECO:0000250" key="1">
    <source>
        <dbReference type="UniProtKB" id="P69249"/>
    </source>
</evidence>
<evidence type="ECO:0000255" key="2">
    <source>
        <dbReference type="HAMAP-Rule" id="MF_00860"/>
    </source>
</evidence>
<evidence type="ECO:0000269" key="3">
    <source>
    </source>
</evidence>
<evidence type="ECO:0000303" key="4">
    <source>
    </source>
</evidence>
<evidence type="ECO:0000303" key="5">
    <source ref="1"/>
</evidence>
<evidence type="ECO:0000303" key="6">
    <source ref="2"/>
</evidence>
<evidence type="ECO:0000305" key="7"/>
<protein>
    <recommendedName>
        <fullName evidence="2 4">Ribulose bisphosphate carboxylase small subunit, chloroplastic</fullName>
        <shortName evidence="4">NbRbCS</shortName>
        <shortName evidence="2 4">RuBisCO small subunit</shortName>
    </recommendedName>
</protein>
<proteinExistence type="evidence at protein level"/>